<gene>
    <name evidence="1" type="primary">miaA</name>
    <name type="ordered locus">YpsIP31758_3654</name>
</gene>
<reference key="1">
    <citation type="journal article" date="2007" name="PLoS Genet.">
        <title>The complete genome sequence of Yersinia pseudotuberculosis IP31758, the causative agent of Far East scarlet-like fever.</title>
        <authorList>
            <person name="Eppinger M."/>
            <person name="Rosovitz M.J."/>
            <person name="Fricke W.F."/>
            <person name="Rasko D.A."/>
            <person name="Kokorina G."/>
            <person name="Fayolle C."/>
            <person name="Lindler L.E."/>
            <person name="Carniel E."/>
            <person name="Ravel J."/>
        </authorList>
    </citation>
    <scope>NUCLEOTIDE SEQUENCE [LARGE SCALE GENOMIC DNA]</scope>
    <source>
        <strain>IP 31758</strain>
    </source>
</reference>
<sequence length="313" mass="34785">MNDIENLDRPPAIFIMGPTASGKTALSIALRQRLPVELVSVDSALIYRGMDIGTAKPSAQELALAPHRLIDIRDPAESYSAADFRKDALKEMADITAAGRIPLLVGGTMLYFKALLDGLSPLPSADPQVRQRIEQQASELGWGALHQQLAVIDPVAAARIHPNDPQRLSRALEVFFISGKTLTELTKISGETLPYRVHQFAIAPASRELLHQRIELRFHQMLDAGFEAEARVLFDRGDLHTDLPAIRCVGYRQMWSYLSGEIDYNDMVYRGVCATRQLAKRQMTWLRGWSSVQWLDSDKPGEALDSVIQVVSA</sequence>
<evidence type="ECO:0000255" key="1">
    <source>
        <dbReference type="HAMAP-Rule" id="MF_00185"/>
    </source>
</evidence>
<organism>
    <name type="scientific">Yersinia pseudotuberculosis serotype O:1b (strain IP 31758)</name>
    <dbReference type="NCBI Taxonomy" id="349747"/>
    <lineage>
        <taxon>Bacteria</taxon>
        <taxon>Pseudomonadati</taxon>
        <taxon>Pseudomonadota</taxon>
        <taxon>Gammaproteobacteria</taxon>
        <taxon>Enterobacterales</taxon>
        <taxon>Yersiniaceae</taxon>
        <taxon>Yersinia</taxon>
    </lineage>
</organism>
<accession>A7FMY0</accession>
<dbReference type="EC" id="2.5.1.75" evidence="1"/>
<dbReference type="EMBL" id="CP000720">
    <property type="protein sequence ID" value="ABS49521.1"/>
    <property type="molecule type" value="Genomic_DNA"/>
</dbReference>
<dbReference type="RefSeq" id="WP_002209149.1">
    <property type="nucleotide sequence ID" value="NC_009708.1"/>
</dbReference>
<dbReference type="SMR" id="A7FMY0"/>
<dbReference type="GeneID" id="57974235"/>
<dbReference type="KEGG" id="ypi:YpsIP31758_3654"/>
<dbReference type="HOGENOM" id="CLU_032616_0_0_6"/>
<dbReference type="Proteomes" id="UP000002412">
    <property type="component" value="Chromosome"/>
</dbReference>
<dbReference type="GO" id="GO:0005524">
    <property type="term" value="F:ATP binding"/>
    <property type="evidence" value="ECO:0007669"/>
    <property type="project" value="UniProtKB-UniRule"/>
</dbReference>
<dbReference type="GO" id="GO:0052381">
    <property type="term" value="F:tRNA dimethylallyltransferase activity"/>
    <property type="evidence" value="ECO:0007669"/>
    <property type="project" value="UniProtKB-UniRule"/>
</dbReference>
<dbReference type="GO" id="GO:0006400">
    <property type="term" value="P:tRNA modification"/>
    <property type="evidence" value="ECO:0007669"/>
    <property type="project" value="TreeGrafter"/>
</dbReference>
<dbReference type="FunFam" id="1.10.20.140:FF:000001">
    <property type="entry name" value="tRNA dimethylallyltransferase"/>
    <property type="match status" value="1"/>
</dbReference>
<dbReference type="Gene3D" id="1.10.20.140">
    <property type="match status" value="1"/>
</dbReference>
<dbReference type="Gene3D" id="3.40.50.300">
    <property type="entry name" value="P-loop containing nucleotide triphosphate hydrolases"/>
    <property type="match status" value="1"/>
</dbReference>
<dbReference type="HAMAP" id="MF_00185">
    <property type="entry name" value="IPP_trans"/>
    <property type="match status" value="1"/>
</dbReference>
<dbReference type="InterPro" id="IPR039657">
    <property type="entry name" value="Dimethylallyltransferase"/>
</dbReference>
<dbReference type="InterPro" id="IPR018022">
    <property type="entry name" value="IPT"/>
</dbReference>
<dbReference type="InterPro" id="IPR027417">
    <property type="entry name" value="P-loop_NTPase"/>
</dbReference>
<dbReference type="NCBIfam" id="TIGR00174">
    <property type="entry name" value="miaA"/>
    <property type="match status" value="1"/>
</dbReference>
<dbReference type="PANTHER" id="PTHR11088">
    <property type="entry name" value="TRNA DIMETHYLALLYLTRANSFERASE"/>
    <property type="match status" value="1"/>
</dbReference>
<dbReference type="PANTHER" id="PTHR11088:SF60">
    <property type="entry name" value="TRNA DIMETHYLALLYLTRANSFERASE"/>
    <property type="match status" value="1"/>
</dbReference>
<dbReference type="Pfam" id="PF01715">
    <property type="entry name" value="IPPT"/>
    <property type="match status" value="1"/>
</dbReference>
<dbReference type="SUPFAM" id="SSF52540">
    <property type="entry name" value="P-loop containing nucleoside triphosphate hydrolases"/>
    <property type="match status" value="1"/>
</dbReference>
<comment type="function">
    <text evidence="1">Catalyzes the transfer of a dimethylallyl group onto the adenine at position 37 in tRNAs that read codons beginning with uridine, leading to the formation of N6-(dimethylallyl)adenosine (i(6)A).</text>
</comment>
<comment type="catalytic activity">
    <reaction evidence="1">
        <text>adenosine(37) in tRNA + dimethylallyl diphosphate = N(6)-dimethylallyladenosine(37) in tRNA + diphosphate</text>
        <dbReference type="Rhea" id="RHEA:26482"/>
        <dbReference type="Rhea" id="RHEA-COMP:10162"/>
        <dbReference type="Rhea" id="RHEA-COMP:10375"/>
        <dbReference type="ChEBI" id="CHEBI:33019"/>
        <dbReference type="ChEBI" id="CHEBI:57623"/>
        <dbReference type="ChEBI" id="CHEBI:74411"/>
        <dbReference type="ChEBI" id="CHEBI:74415"/>
        <dbReference type="EC" id="2.5.1.75"/>
    </reaction>
</comment>
<comment type="cofactor">
    <cofactor evidence="1">
        <name>Mg(2+)</name>
        <dbReference type="ChEBI" id="CHEBI:18420"/>
    </cofactor>
</comment>
<comment type="subunit">
    <text evidence="1">Monomer.</text>
</comment>
<comment type="similarity">
    <text evidence="1">Belongs to the IPP transferase family.</text>
</comment>
<keyword id="KW-0067">ATP-binding</keyword>
<keyword id="KW-0460">Magnesium</keyword>
<keyword id="KW-0547">Nucleotide-binding</keyword>
<keyword id="KW-0808">Transferase</keyword>
<keyword id="KW-0819">tRNA processing</keyword>
<protein>
    <recommendedName>
        <fullName evidence="1">tRNA dimethylallyltransferase</fullName>
        <ecNumber evidence="1">2.5.1.75</ecNumber>
    </recommendedName>
    <alternativeName>
        <fullName evidence="1">Dimethylallyl diphosphate:tRNA dimethylallyltransferase</fullName>
        <shortName evidence="1">DMAPP:tRNA dimethylallyltransferase</shortName>
        <shortName evidence="1">DMATase</shortName>
    </alternativeName>
    <alternativeName>
        <fullName evidence="1">Isopentenyl-diphosphate:tRNA isopentenyltransferase</fullName>
        <shortName evidence="1">IPP transferase</shortName>
        <shortName evidence="1">IPPT</shortName>
        <shortName evidence="1">IPTase</shortName>
    </alternativeName>
</protein>
<proteinExistence type="inferred from homology"/>
<name>MIAA_YERP3</name>
<feature type="chain" id="PRO_1000058441" description="tRNA dimethylallyltransferase">
    <location>
        <begin position="1"/>
        <end position="313"/>
    </location>
</feature>
<feature type="region of interest" description="Interaction with substrate tRNA" evidence="1">
    <location>
        <begin position="42"/>
        <end position="45"/>
    </location>
</feature>
<feature type="region of interest" description="Interaction with substrate tRNA" evidence="1">
    <location>
        <begin position="166"/>
        <end position="170"/>
    </location>
</feature>
<feature type="region of interest" description="Interaction with substrate tRNA" evidence="1">
    <location>
        <begin position="247"/>
        <end position="252"/>
    </location>
</feature>
<feature type="binding site" evidence="1">
    <location>
        <begin position="17"/>
        <end position="24"/>
    </location>
    <ligand>
        <name>ATP</name>
        <dbReference type="ChEBI" id="CHEBI:30616"/>
    </ligand>
</feature>
<feature type="binding site" evidence="1">
    <location>
        <begin position="19"/>
        <end position="24"/>
    </location>
    <ligand>
        <name>substrate</name>
    </ligand>
</feature>
<feature type="site" description="Interaction with substrate tRNA" evidence="1">
    <location>
        <position position="108"/>
    </location>
</feature>
<feature type="site" description="Interaction with substrate tRNA" evidence="1">
    <location>
        <position position="130"/>
    </location>
</feature>